<comment type="function">
    <text evidence="1">Specifically methylates position 2 of adenine 2503 in 23S rRNA and position 2 of adenine 37 in tRNAs.</text>
</comment>
<comment type="catalytic activity">
    <reaction evidence="1">
        <text>adenosine(2503) in 23S rRNA + 2 reduced [2Fe-2S]-[ferredoxin] + 2 S-adenosyl-L-methionine = 2-methyladenosine(2503) in 23S rRNA + 5'-deoxyadenosine + L-methionine + 2 oxidized [2Fe-2S]-[ferredoxin] + S-adenosyl-L-homocysteine</text>
        <dbReference type="Rhea" id="RHEA:42916"/>
        <dbReference type="Rhea" id="RHEA-COMP:10000"/>
        <dbReference type="Rhea" id="RHEA-COMP:10001"/>
        <dbReference type="Rhea" id="RHEA-COMP:10152"/>
        <dbReference type="Rhea" id="RHEA-COMP:10282"/>
        <dbReference type="ChEBI" id="CHEBI:17319"/>
        <dbReference type="ChEBI" id="CHEBI:33737"/>
        <dbReference type="ChEBI" id="CHEBI:33738"/>
        <dbReference type="ChEBI" id="CHEBI:57844"/>
        <dbReference type="ChEBI" id="CHEBI:57856"/>
        <dbReference type="ChEBI" id="CHEBI:59789"/>
        <dbReference type="ChEBI" id="CHEBI:74411"/>
        <dbReference type="ChEBI" id="CHEBI:74497"/>
        <dbReference type="EC" id="2.1.1.192"/>
    </reaction>
</comment>
<comment type="catalytic activity">
    <reaction evidence="1">
        <text>adenosine(37) in tRNA + 2 reduced [2Fe-2S]-[ferredoxin] + 2 S-adenosyl-L-methionine = 2-methyladenosine(37) in tRNA + 5'-deoxyadenosine + L-methionine + 2 oxidized [2Fe-2S]-[ferredoxin] + S-adenosyl-L-homocysteine</text>
        <dbReference type="Rhea" id="RHEA:43332"/>
        <dbReference type="Rhea" id="RHEA-COMP:10000"/>
        <dbReference type="Rhea" id="RHEA-COMP:10001"/>
        <dbReference type="Rhea" id="RHEA-COMP:10162"/>
        <dbReference type="Rhea" id="RHEA-COMP:10485"/>
        <dbReference type="ChEBI" id="CHEBI:17319"/>
        <dbReference type="ChEBI" id="CHEBI:33737"/>
        <dbReference type="ChEBI" id="CHEBI:33738"/>
        <dbReference type="ChEBI" id="CHEBI:57844"/>
        <dbReference type="ChEBI" id="CHEBI:57856"/>
        <dbReference type="ChEBI" id="CHEBI:59789"/>
        <dbReference type="ChEBI" id="CHEBI:74411"/>
        <dbReference type="ChEBI" id="CHEBI:74497"/>
        <dbReference type="EC" id="2.1.1.192"/>
    </reaction>
</comment>
<comment type="cofactor">
    <cofactor evidence="1">
        <name>[4Fe-4S] cluster</name>
        <dbReference type="ChEBI" id="CHEBI:49883"/>
    </cofactor>
    <text evidence="1">Binds 1 [4Fe-4S] cluster. The cluster is coordinated with 3 cysteines and an exchangeable S-adenosyl-L-methionine.</text>
</comment>
<comment type="subcellular location">
    <subcellularLocation>
        <location evidence="1">Cytoplasm</location>
    </subcellularLocation>
</comment>
<comment type="miscellaneous">
    <text evidence="1">Reaction proceeds by a ping-pong mechanism involving intermediate methylation of a conserved cysteine residue.</text>
</comment>
<comment type="similarity">
    <text evidence="1">Belongs to the radical SAM superfamily. RlmN family.</text>
</comment>
<name>RLMN_THEPX</name>
<evidence type="ECO:0000255" key="1">
    <source>
        <dbReference type="HAMAP-Rule" id="MF_01849"/>
    </source>
</evidence>
<evidence type="ECO:0000255" key="2">
    <source>
        <dbReference type="PROSITE-ProRule" id="PRU01266"/>
    </source>
</evidence>
<reference key="1">
    <citation type="submission" date="2008-01" db="EMBL/GenBank/DDBJ databases">
        <title>Complete sequence of Thermoanaerobacter sp. X514.</title>
        <authorList>
            <consortium name="US DOE Joint Genome Institute"/>
            <person name="Copeland A."/>
            <person name="Lucas S."/>
            <person name="Lapidus A."/>
            <person name="Barry K."/>
            <person name="Glavina del Rio T."/>
            <person name="Dalin E."/>
            <person name="Tice H."/>
            <person name="Pitluck S."/>
            <person name="Bruce D."/>
            <person name="Goodwin L."/>
            <person name="Saunders E."/>
            <person name="Brettin T."/>
            <person name="Detter J.C."/>
            <person name="Han C."/>
            <person name="Schmutz J."/>
            <person name="Larimer F."/>
            <person name="Land M."/>
            <person name="Hauser L."/>
            <person name="Kyrpides N."/>
            <person name="Kim E."/>
            <person name="Hemme C."/>
            <person name="Fields M.W."/>
            <person name="He Z."/>
            <person name="Zhou J."/>
            <person name="Richardson P."/>
        </authorList>
    </citation>
    <scope>NUCLEOTIDE SEQUENCE [LARGE SCALE GENOMIC DNA]</scope>
    <source>
        <strain>X514</strain>
    </source>
</reference>
<keyword id="KW-0004">4Fe-4S</keyword>
<keyword id="KW-0963">Cytoplasm</keyword>
<keyword id="KW-1015">Disulfide bond</keyword>
<keyword id="KW-0408">Iron</keyword>
<keyword id="KW-0411">Iron-sulfur</keyword>
<keyword id="KW-0479">Metal-binding</keyword>
<keyword id="KW-0489">Methyltransferase</keyword>
<keyword id="KW-0698">rRNA processing</keyword>
<keyword id="KW-0949">S-adenosyl-L-methionine</keyword>
<keyword id="KW-0808">Transferase</keyword>
<keyword id="KW-0819">tRNA processing</keyword>
<gene>
    <name evidence="1" type="primary">rlmN</name>
    <name type="ordered locus">Teth514_1751</name>
</gene>
<organism>
    <name type="scientific">Thermoanaerobacter sp. (strain X514)</name>
    <dbReference type="NCBI Taxonomy" id="399726"/>
    <lineage>
        <taxon>Bacteria</taxon>
        <taxon>Bacillati</taxon>
        <taxon>Bacillota</taxon>
        <taxon>Clostridia</taxon>
        <taxon>Thermoanaerobacterales</taxon>
        <taxon>Thermoanaerobacteraceae</taxon>
        <taxon>Thermoanaerobacter</taxon>
    </lineage>
</organism>
<dbReference type="EC" id="2.1.1.192" evidence="1"/>
<dbReference type="EMBL" id="CP000923">
    <property type="protein sequence ID" value="ABY93037.1"/>
    <property type="molecule type" value="Genomic_DNA"/>
</dbReference>
<dbReference type="RefSeq" id="WP_003868213.1">
    <property type="nucleotide sequence ID" value="NC_010320.1"/>
</dbReference>
<dbReference type="SMR" id="B0K1Y9"/>
<dbReference type="KEGG" id="tex:Teth514_1751"/>
<dbReference type="HOGENOM" id="CLU_029101_0_1_9"/>
<dbReference type="Proteomes" id="UP000002155">
    <property type="component" value="Chromosome"/>
</dbReference>
<dbReference type="GO" id="GO:0005737">
    <property type="term" value="C:cytoplasm"/>
    <property type="evidence" value="ECO:0007669"/>
    <property type="project" value="UniProtKB-SubCell"/>
</dbReference>
<dbReference type="GO" id="GO:0051539">
    <property type="term" value="F:4 iron, 4 sulfur cluster binding"/>
    <property type="evidence" value="ECO:0007669"/>
    <property type="project" value="UniProtKB-UniRule"/>
</dbReference>
<dbReference type="GO" id="GO:0046872">
    <property type="term" value="F:metal ion binding"/>
    <property type="evidence" value="ECO:0007669"/>
    <property type="project" value="UniProtKB-KW"/>
</dbReference>
<dbReference type="GO" id="GO:0070040">
    <property type="term" value="F:rRNA (adenine(2503)-C2-)-methyltransferase activity"/>
    <property type="evidence" value="ECO:0007669"/>
    <property type="project" value="UniProtKB-UniRule"/>
</dbReference>
<dbReference type="GO" id="GO:0019843">
    <property type="term" value="F:rRNA binding"/>
    <property type="evidence" value="ECO:0007669"/>
    <property type="project" value="UniProtKB-UniRule"/>
</dbReference>
<dbReference type="GO" id="GO:0002935">
    <property type="term" value="F:tRNA (adenine(37)-C2)-methyltransferase activity"/>
    <property type="evidence" value="ECO:0007669"/>
    <property type="project" value="UniProtKB-UniRule"/>
</dbReference>
<dbReference type="GO" id="GO:0000049">
    <property type="term" value="F:tRNA binding"/>
    <property type="evidence" value="ECO:0007669"/>
    <property type="project" value="UniProtKB-UniRule"/>
</dbReference>
<dbReference type="GO" id="GO:0070475">
    <property type="term" value="P:rRNA base methylation"/>
    <property type="evidence" value="ECO:0007669"/>
    <property type="project" value="UniProtKB-UniRule"/>
</dbReference>
<dbReference type="GO" id="GO:0030488">
    <property type="term" value="P:tRNA methylation"/>
    <property type="evidence" value="ECO:0007669"/>
    <property type="project" value="UniProtKB-UniRule"/>
</dbReference>
<dbReference type="CDD" id="cd01335">
    <property type="entry name" value="Radical_SAM"/>
    <property type="match status" value="1"/>
</dbReference>
<dbReference type="FunFam" id="1.10.150.530:FF:000003">
    <property type="entry name" value="Dual-specificity RNA methyltransferase RlmN"/>
    <property type="match status" value="1"/>
</dbReference>
<dbReference type="FunFam" id="3.20.20.70:FF:000014">
    <property type="entry name" value="Probable dual-specificity RNA methyltransferase RlmN"/>
    <property type="match status" value="1"/>
</dbReference>
<dbReference type="Gene3D" id="1.10.150.530">
    <property type="match status" value="1"/>
</dbReference>
<dbReference type="Gene3D" id="3.20.20.70">
    <property type="entry name" value="Aldolase class I"/>
    <property type="match status" value="1"/>
</dbReference>
<dbReference type="HAMAP" id="MF_01849">
    <property type="entry name" value="RNA_methyltr_RlmN"/>
    <property type="match status" value="1"/>
</dbReference>
<dbReference type="InterPro" id="IPR013785">
    <property type="entry name" value="Aldolase_TIM"/>
</dbReference>
<dbReference type="InterPro" id="IPR040072">
    <property type="entry name" value="Methyltransferase_A"/>
</dbReference>
<dbReference type="InterPro" id="IPR048641">
    <property type="entry name" value="RlmN_N"/>
</dbReference>
<dbReference type="InterPro" id="IPR027492">
    <property type="entry name" value="RNA_MTrfase_RlmN"/>
</dbReference>
<dbReference type="InterPro" id="IPR004383">
    <property type="entry name" value="rRNA_lsu_MTrfase_RlmN/Cfr"/>
</dbReference>
<dbReference type="InterPro" id="IPR007197">
    <property type="entry name" value="rSAM"/>
</dbReference>
<dbReference type="NCBIfam" id="TIGR00048">
    <property type="entry name" value="rRNA_mod_RlmN"/>
    <property type="match status" value="1"/>
</dbReference>
<dbReference type="PANTHER" id="PTHR30544">
    <property type="entry name" value="23S RRNA METHYLTRANSFERASE"/>
    <property type="match status" value="1"/>
</dbReference>
<dbReference type="PANTHER" id="PTHR30544:SF5">
    <property type="entry name" value="RADICAL SAM CORE DOMAIN-CONTAINING PROTEIN"/>
    <property type="match status" value="1"/>
</dbReference>
<dbReference type="Pfam" id="PF04055">
    <property type="entry name" value="Radical_SAM"/>
    <property type="match status" value="1"/>
</dbReference>
<dbReference type="Pfam" id="PF21016">
    <property type="entry name" value="RlmN_N"/>
    <property type="match status" value="1"/>
</dbReference>
<dbReference type="PIRSF" id="PIRSF006004">
    <property type="entry name" value="CHP00048"/>
    <property type="match status" value="1"/>
</dbReference>
<dbReference type="SFLD" id="SFLDF00275">
    <property type="entry name" value="adenosine_C2_methyltransferase"/>
    <property type="match status" value="1"/>
</dbReference>
<dbReference type="SFLD" id="SFLDS00029">
    <property type="entry name" value="Radical_SAM"/>
    <property type="match status" value="1"/>
</dbReference>
<dbReference type="SUPFAM" id="SSF102114">
    <property type="entry name" value="Radical SAM enzymes"/>
    <property type="match status" value="1"/>
</dbReference>
<dbReference type="PROSITE" id="PS51918">
    <property type="entry name" value="RADICAL_SAM"/>
    <property type="match status" value="1"/>
</dbReference>
<protein>
    <recommendedName>
        <fullName evidence="1">Probable dual-specificity RNA methyltransferase RlmN</fullName>
        <ecNumber evidence="1">2.1.1.192</ecNumber>
    </recommendedName>
    <alternativeName>
        <fullName evidence="1">23S rRNA (adenine(2503)-C(2))-methyltransferase</fullName>
    </alternativeName>
    <alternativeName>
        <fullName evidence="1">23S rRNA m2A2503 methyltransferase</fullName>
    </alternativeName>
    <alternativeName>
        <fullName evidence="1">Ribosomal RNA large subunit methyltransferase N</fullName>
    </alternativeName>
    <alternativeName>
        <fullName evidence="1">tRNA (adenine(37)-C(2))-methyltransferase</fullName>
    </alternativeName>
    <alternativeName>
        <fullName evidence="1">tRNA m2A37 methyltransferase</fullName>
    </alternativeName>
</protein>
<proteinExistence type="inferred from homology"/>
<accession>B0K1Y9</accession>
<sequence>MYNLKDMTLEEMEEFFVNIGESRYRAKQIYKWIYGKKVTDFDQMTDISKNLRSKLKEIAYVSQLKIEERRVSEIDDTVKYLFLLEDGNIIEGVAIKYRFGNTACVSTQVGCNMRCSFCASAIGGKVRDLKASEMVDQVMAIDSDYGKISNIVLMGSGEPFDNYDEVMKFIKIVNNPHGLGIGSRHITISTCGIVPKIYQFADEKLQVNLSISLHAPNDELRTQLMPINKAYPLEELMKACKYYVDKTRRRITFEYSLIEGVNDKKEHAYQLVDLLKGMLCHINLIPINYVREIGFKKANNEKVMMFKRIIEDAGISCTVRRELGSDIEAACGQLRRKYLKER</sequence>
<feature type="chain" id="PRO_0000350495" description="Probable dual-specificity RNA methyltransferase RlmN">
    <location>
        <begin position="1"/>
        <end position="342"/>
    </location>
</feature>
<feature type="domain" description="Radical SAM core" evidence="2">
    <location>
        <begin position="97"/>
        <end position="326"/>
    </location>
</feature>
<feature type="active site" description="Proton acceptor" evidence="1">
    <location>
        <position position="91"/>
    </location>
</feature>
<feature type="active site" description="S-methylcysteine intermediate" evidence="1">
    <location>
        <position position="331"/>
    </location>
</feature>
<feature type="binding site" evidence="1">
    <location>
        <position position="111"/>
    </location>
    <ligand>
        <name>[4Fe-4S] cluster</name>
        <dbReference type="ChEBI" id="CHEBI:49883"/>
        <note>4Fe-4S-S-AdoMet</note>
    </ligand>
</feature>
<feature type="binding site" evidence="1">
    <location>
        <position position="115"/>
    </location>
    <ligand>
        <name>[4Fe-4S] cluster</name>
        <dbReference type="ChEBI" id="CHEBI:49883"/>
        <note>4Fe-4S-S-AdoMet</note>
    </ligand>
</feature>
<feature type="binding site" evidence="1">
    <location>
        <position position="118"/>
    </location>
    <ligand>
        <name>[4Fe-4S] cluster</name>
        <dbReference type="ChEBI" id="CHEBI:49883"/>
        <note>4Fe-4S-S-AdoMet</note>
    </ligand>
</feature>
<feature type="binding site" evidence="1">
    <location>
        <begin position="157"/>
        <end position="158"/>
    </location>
    <ligand>
        <name>S-adenosyl-L-methionine</name>
        <dbReference type="ChEBI" id="CHEBI:59789"/>
    </ligand>
</feature>
<feature type="binding site" evidence="1">
    <location>
        <position position="189"/>
    </location>
    <ligand>
        <name>S-adenosyl-L-methionine</name>
        <dbReference type="ChEBI" id="CHEBI:59789"/>
    </ligand>
</feature>
<feature type="binding site" evidence="1">
    <location>
        <begin position="212"/>
        <end position="214"/>
    </location>
    <ligand>
        <name>S-adenosyl-L-methionine</name>
        <dbReference type="ChEBI" id="CHEBI:59789"/>
    </ligand>
</feature>
<feature type="binding site" evidence="1">
    <location>
        <position position="288"/>
    </location>
    <ligand>
        <name>S-adenosyl-L-methionine</name>
        <dbReference type="ChEBI" id="CHEBI:59789"/>
    </ligand>
</feature>
<feature type="disulfide bond" description="(transient)" evidence="1">
    <location>
        <begin position="104"/>
        <end position="331"/>
    </location>
</feature>